<sequence length="91" mass="10031">MGLTETTLVLVSLAFFASAVAHNCQNGTRPASEEKREGCDYYCWNAETNSWDKFFFGNGERCFYNDGGEGLCQNGECHLTTDSSVPNDSDV</sequence>
<dbReference type="EMBL" id="HQ605983">
    <property type="protein sequence ID" value="AEE89466.1"/>
    <property type="molecule type" value="mRNA"/>
</dbReference>
<dbReference type="VEuPathDB" id="VectorBase:ISCI013958"/>
<dbReference type="VEuPathDB" id="VectorBase:ISCP_010536"/>
<dbReference type="VEuPathDB" id="VectorBase:ISCW013958"/>
<dbReference type="OrthoDB" id="46924at6933"/>
<dbReference type="Proteomes" id="UP000001555">
    <property type="component" value="Unplaced"/>
</dbReference>
<dbReference type="GO" id="GO:0005576">
    <property type="term" value="C:extracellular region"/>
    <property type="evidence" value="ECO:0007669"/>
    <property type="project" value="UniProtKB-SubCell"/>
</dbReference>
<dbReference type="GO" id="GO:0090729">
    <property type="term" value="F:toxin activity"/>
    <property type="evidence" value="ECO:0007669"/>
    <property type="project" value="UniProtKB-KW"/>
</dbReference>
<dbReference type="CDD" id="cd23501">
    <property type="entry name" value="TSLPI_Salp14_NTD"/>
    <property type="match status" value="1"/>
</dbReference>
<dbReference type="InterPro" id="IPR011694">
    <property type="entry name" value="Ixonnexin-like"/>
</dbReference>
<dbReference type="Pfam" id="PF07771">
    <property type="entry name" value="TSGP1"/>
    <property type="match status" value="1"/>
</dbReference>
<evidence type="ECO:0000255" key="1"/>
<evidence type="ECO:0000255" key="2">
    <source>
        <dbReference type="PROSITE-ProRule" id="PRU00498"/>
    </source>
</evidence>
<evidence type="ECO:0000269" key="3">
    <source>
    </source>
</evidence>
<evidence type="ECO:0000269" key="4">
    <source>
    </source>
</evidence>
<evidence type="ECO:0000269" key="5">
    <source>
    </source>
</evidence>
<evidence type="ECO:0000303" key="6">
    <source>
    </source>
</evidence>
<evidence type="ECO:0000303" key="7">
    <source>
    </source>
</evidence>
<evidence type="ECO:0000305" key="8"/>
<evidence type="ECO:0000312" key="9">
    <source>
        <dbReference type="EMBL" id="AEE89466.1"/>
    </source>
</evidence>
<accession>F6KSY1</accession>
<keyword id="KW-1216">Complement system impairing toxin</keyword>
<keyword id="KW-0325">Glycoprotein</keyword>
<keyword id="KW-1185">Reference proteome</keyword>
<keyword id="KW-0964">Secreted</keyword>
<keyword id="KW-0732">Signal</keyword>
<keyword id="KW-0800">Toxin</keyword>
<reference evidence="9" key="1">
    <citation type="journal article" date="2011" name="PLoS ONE">
        <title>Identification and characterization of Ixodes scapularis antigens that elicit tick immunity using yeast surface display.</title>
        <authorList>
            <person name="Schuijt T.J."/>
            <person name="Narasimhan S."/>
            <person name="Daffre S."/>
            <person name="DePonte K."/>
            <person name="Hovius J.W."/>
            <person name="Van't Veer C."/>
            <person name="van der Poll T."/>
            <person name="Bakhtiari K."/>
            <person name="Meijers J.C."/>
            <person name="Boder E.T."/>
            <person name="van Dam A.P."/>
            <person name="Fikrig E."/>
        </authorList>
    </citation>
    <scope>NUCLEOTIDE SEQUENCE [MRNA]</scope>
    <scope>FUNCTION (MICROBIAL INFECTION)</scope>
    <scope>TISSUE SPECIFICITY</scope>
    <scope>DEVELOPMENTAL STAGE</scope>
    <scope>INDUCTION BY BLOOD FEEDING</scope>
</reference>
<reference evidence="8" key="2">
    <citation type="journal article" date="2011" name="Cell Host Microbe">
        <title>A tick mannose-binding lectin inhibitor interferes with the vertebrate complement cascade to enhance transmission of the lyme disease agent.</title>
        <authorList>
            <person name="Schuijt T.J."/>
            <person name="Coumou J."/>
            <person name="Narasimhan S."/>
            <person name="Dai J."/>
            <person name="Deponte K."/>
            <person name="Wouters D."/>
            <person name="Brouwer M."/>
            <person name="Oei A."/>
            <person name="Roelofs J.J."/>
            <person name="van Dam A.P."/>
            <person name="van der Poll T."/>
            <person name="Van't Veer C."/>
            <person name="Hovius J.W."/>
            <person name="Fikrig E."/>
        </authorList>
    </citation>
    <scope>FUNCTION</scope>
    <scope>FUNCTION (MICROBIAL INFECTION)</scope>
    <scope>TISSUE SPECIFICITY</scope>
    <scope>GLYCOSYLATION</scope>
    <scope>INDUCTION BY BLOOD FEEDING</scope>
    <scope>INDUCTION (MICROBIAL INFECTION)</scope>
    <scope>DISRUPTION PHENOTYPE (MICROBIAL INFECTION)</scope>
</reference>
<reference evidence="8" key="3">
    <citation type="journal article" date="2021" name="J. Biol. Chem.">
        <title>Molecular basis of anticoagulant and anticomplement activity of the tick salivary protein Salp14 and its homologs.</title>
        <authorList>
            <person name="Denisov S.S."/>
            <person name="Ippel J.H."/>
            <person name="Castoldi E."/>
            <person name="Mans B.J."/>
            <person name="Hackeng T.M."/>
            <person name="Dijkgraaf I."/>
        </authorList>
    </citation>
    <scope>FUNCTION</scope>
</reference>
<proteinExistence type="evidence at protein level"/>
<comment type="function">
    <text evidence="4 5">Inhibits the lectin pathway of complement system activation in the host by reducing binding of mannose-binding lectin and L-ficolin to their ligands (PubMed:21843870, PubMed:34118237). Does not affect the classical and alternative pathways of complement system activation in the host (PubMed:21843870).</text>
</comment>
<comment type="function">
    <text evidence="3 4">(Microbial infection) Protects Borrelia garinii (strain A87S) from host complement-mediated killing by preventing deposition of host C5b-9 membrane attack complexes on the surface of spirochetes (PubMed:21246036, PubMed:21843870). Inhibits phagocytosis of B.garinii (strain A87S) by human neutrophils (PubMed:21843870). Impairs Borrelia-induced complement-mediated chemotaxis of human polymorphonuclear leukocytes (PubMed:21843870).</text>
</comment>
<comment type="function">
    <text evidence="4">(Microbial infection) Protects Borrelia burgdorferi (strain N40), which is resistant to normal human serum, from Borrelia-opsonizing antibody-mediated complement-dependent killing.</text>
</comment>
<comment type="subcellular location">
    <subcellularLocation>
        <location evidence="8">Secreted</location>
    </subcellularLocation>
</comment>
<comment type="tissue specificity">
    <text evidence="3 4">Nymph salivary gland (at protein level) (PubMed:21246036). Saliva (at protein level) (PubMed:21843870). Not detected in midgut (PubMed:21843870).</text>
</comment>
<comment type="developmental stage">
    <text evidence="3">Expressed primarily in nymphs.</text>
</comment>
<comment type="induction">
    <text evidence="3 4">Up-regulated in salivary glands following blood feeding.</text>
</comment>
<comment type="induction">
    <text evidence="4">(Microbial infection) In B.burgdorferi-infected nymphs, up-regulated in the early phase of engorgement and down-regulated after blood feeding compared to pathogen-free nymphs.</text>
</comment>
<comment type="PTM">
    <text evidence="4">Glycosylated; deglycosylation largely abrogates the complement inhibitory effect.</text>
</comment>
<comment type="disruption phenotype">
    <text evidence="4">(Microbial infection) RNAi-mediated knockdown results in decreased loads of B.burgdorferi (strain N40) in nymph midguts after blood feeding (PubMed:21843870). Reduced transmission of B.burgdorferi from ticks to mice (PubMed:21843870).</text>
</comment>
<comment type="miscellaneous">
    <text evidence="4">Immunization of mice against the protein reduces B.burgdorferi loads in mouse tissues after infection and acquisition of parasites from Borrelia-infected hosts by ticks.</text>
</comment>
<comment type="similarity">
    <text evidence="8">Belongs to the salp14 family.</text>
</comment>
<feature type="signal peptide" evidence="1">
    <location>
        <begin position="1"/>
        <end position="21"/>
    </location>
</feature>
<feature type="chain" id="PRO_5003338130" description="Salivary lectin pathway inhibitor" evidence="1">
    <location>
        <begin position="22"/>
        <end position="91"/>
    </location>
</feature>
<feature type="glycosylation site" description="N-linked (GlcNAc...) asparagine" evidence="2">
    <location>
        <position position="26"/>
    </location>
</feature>
<feature type="glycosylation site" description="N-linked (GlcNAc...) asparagine" evidence="2">
    <location>
        <position position="87"/>
    </location>
</feature>
<organism evidence="9">
    <name type="scientific">Ixodes scapularis</name>
    <name type="common">Black-legged tick</name>
    <name type="synonym">Deer tick</name>
    <dbReference type="NCBI Taxonomy" id="6945"/>
    <lineage>
        <taxon>Eukaryota</taxon>
        <taxon>Metazoa</taxon>
        <taxon>Ecdysozoa</taxon>
        <taxon>Arthropoda</taxon>
        <taxon>Chelicerata</taxon>
        <taxon>Arachnida</taxon>
        <taxon>Acari</taxon>
        <taxon>Parasitiformes</taxon>
        <taxon>Ixodida</taxon>
        <taxon>Ixodoidea</taxon>
        <taxon>Ixodidae</taxon>
        <taxon>Ixodinae</taxon>
        <taxon>Ixodes</taxon>
    </lineage>
</organism>
<name>TSLPI_IXOSC</name>
<protein>
    <recommendedName>
        <fullName evidence="7">Salivary lectin pathway inhibitor</fullName>
        <shortName evidence="7">TSLPI</shortName>
    </recommendedName>
    <alternativeName>
        <fullName evidence="9">Salivary protein antigen P8</fullName>
        <shortName evidence="6">P8</shortName>
    </alternativeName>
</protein>